<comment type="function">
    <text evidence="1">DNA polymerase involved in damage-induced mutagenesis and translesion synthesis (TLS). It is not the major replicative DNA polymerase.</text>
</comment>
<comment type="catalytic activity">
    <reaction evidence="1">
        <text>DNA(n) + a 2'-deoxyribonucleoside 5'-triphosphate = DNA(n+1) + diphosphate</text>
        <dbReference type="Rhea" id="RHEA:22508"/>
        <dbReference type="Rhea" id="RHEA-COMP:17339"/>
        <dbReference type="Rhea" id="RHEA-COMP:17340"/>
        <dbReference type="ChEBI" id="CHEBI:33019"/>
        <dbReference type="ChEBI" id="CHEBI:61560"/>
        <dbReference type="ChEBI" id="CHEBI:173112"/>
        <dbReference type="EC" id="2.7.7.7"/>
    </reaction>
</comment>
<comment type="subcellular location">
    <subcellularLocation>
        <location evidence="1">Cytoplasm</location>
    </subcellularLocation>
</comment>
<comment type="similarity">
    <text evidence="1">Belongs to the DNA polymerase type-C family. DnaE2 subfamily.</text>
</comment>
<evidence type="ECO:0000255" key="1">
    <source>
        <dbReference type="HAMAP-Rule" id="MF_01902"/>
    </source>
</evidence>
<evidence type="ECO:0000256" key="2">
    <source>
        <dbReference type="SAM" id="MobiDB-lite"/>
    </source>
</evidence>
<feature type="chain" id="PRO_0000103364" description="Error-prone DNA polymerase 3">
    <location>
        <begin position="1"/>
        <end position="1087"/>
    </location>
</feature>
<feature type="region of interest" description="Disordered" evidence="2">
    <location>
        <begin position="1040"/>
        <end position="1064"/>
    </location>
</feature>
<sequence length="1087" mass="122156">MSYAELQVTTHFSFLRGASSAQELFETAKALGIEALGVVDRNSLAGIVRALEASRATGLRLVIGCRLDLADGMSVLVYPTDRAAYSRLTRLITLGKSRGGKNNCLLHWDDVVAYTDGMIGILVPDLPDDLCGIQLRKMAELFGDRAYVSLCLRRRQNDQLRLHEISNLATRFKVRTVVTNDVLFHEPGRRQLQDIVTCIRTRTTIDEVGFERERHADRYLKPPEEMERLFPRYRQALARTMEIVRRCTFSLEELTYQYPEEAIVPGKDAQASLEHYVWQCVPDRYPEGLPPDVLKVVRHELDLIRTMKYAPYFLTVFSIVRYARSQGILCQGRGSAANSAVCYILGITSIDPSTNDLLFERFVSQERDEPPDIDVDFEHERREEVIQWIYRTYTREKAALCATVTRYRARGAIRDVGKALGLPEDVIKALSSGMWSWSEEVCDRNVRELNLNPDDRRLVLTLKLAQQLMGAPRHLGQHPGGFVLTHDRLDDLVPIEPATMKDRQIIEWDKDDVEALKFMKVDILALGMLTCMAKAFDLIREHKDRDLDLSKIEQEDSVTYAMIRKADTLGTFQIESRAQMAMLPRLKPRTFYDLVVQVAIVRPGPIQGDMVHPYLRRREGKEAVEYPTPELEAVLGKTLGVPLFQESAMRVAMVCAGFTGGEADQLRKSMATFKFTGGVSQFKDKLVSGMVRNGYAPEFAEKTFSQLEGFGSYGFPESHAASFALIAYASSYIKCHYPEAFCAALINSQPMGFYAPAQIVGDARAHGVEVRPVCINRSRWDCTLERIGNSDRHAVRLGFRQVKGLAVADAARVVAARMNNAFVSVDDMWRRSGVPSEALVQLAKADAFLPSLKLERRDALWAIKALRDEPLPLFAAAAEREMAAIAEQQEPGVALRQMTDGHNVIEDYSHTGLTLRQHPIAFLRKDLSVRNIITCAEAMNSRDGRWVYTAGLVLVRQKPGSAKGVMFITIEDETGPANLVVWPTLFEKRRRAVLGSSMMAINGRIQREGEVVHLVAQQLFDLSGDLTGLADRDEEFKLPAGRGDEFAHGSPGSSDTRDKSKPVVAPRDIFTPDLHIDTLKIKSRNFH</sequence>
<organism>
    <name type="scientific">Agrobacterium fabrum (strain C58 / ATCC 33970)</name>
    <name type="common">Agrobacterium tumefaciens (strain C58)</name>
    <dbReference type="NCBI Taxonomy" id="176299"/>
    <lineage>
        <taxon>Bacteria</taxon>
        <taxon>Pseudomonadati</taxon>
        <taxon>Pseudomonadota</taxon>
        <taxon>Alphaproteobacteria</taxon>
        <taxon>Hyphomicrobiales</taxon>
        <taxon>Rhizobiaceae</taxon>
        <taxon>Rhizobium/Agrobacterium group</taxon>
        <taxon>Agrobacterium</taxon>
        <taxon>Agrobacterium tumefaciens complex</taxon>
    </lineage>
</organism>
<geneLocation type="plasmid">
    <name>pTiC58</name>
</geneLocation>
<proteinExistence type="inferred from homology"/>
<gene>
    <name evidence="1" type="primary">dnaE2-3</name>
    <name type="ordered locus">Atu6093</name>
    <name type="ORF">AGR_pTi_175</name>
</gene>
<protein>
    <recommendedName>
        <fullName evidence="1">Error-prone DNA polymerase 3</fullName>
        <ecNumber evidence="1">2.7.7.7</ecNumber>
    </recommendedName>
</protein>
<reference key="1">
    <citation type="journal article" date="2001" name="Science">
        <title>The genome of the natural genetic engineer Agrobacterium tumefaciens C58.</title>
        <authorList>
            <person name="Wood D.W."/>
            <person name="Setubal J.C."/>
            <person name="Kaul R."/>
            <person name="Monks D.E."/>
            <person name="Kitajima J.P."/>
            <person name="Okura V.K."/>
            <person name="Zhou Y."/>
            <person name="Chen L."/>
            <person name="Wood G.E."/>
            <person name="Almeida N.F. Jr."/>
            <person name="Woo L."/>
            <person name="Chen Y."/>
            <person name="Paulsen I.T."/>
            <person name="Eisen J.A."/>
            <person name="Karp P.D."/>
            <person name="Bovee D. Sr."/>
            <person name="Chapman P."/>
            <person name="Clendenning J."/>
            <person name="Deatherage G."/>
            <person name="Gillet W."/>
            <person name="Grant C."/>
            <person name="Kutyavin T."/>
            <person name="Levy R."/>
            <person name="Li M.-J."/>
            <person name="McClelland E."/>
            <person name="Palmieri A."/>
            <person name="Raymond C."/>
            <person name="Rouse G."/>
            <person name="Saenphimmachak C."/>
            <person name="Wu Z."/>
            <person name="Romero P."/>
            <person name="Gordon D."/>
            <person name="Zhang S."/>
            <person name="Yoo H."/>
            <person name="Tao Y."/>
            <person name="Biddle P."/>
            <person name="Jung M."/>
            <person name="Krespan W."/>
            <person name="Perry M."/>
            <person name="Gordon-Kamm B."/>
            <person name="Liao L."/>
            <person name="Kim S."/>
            <person name="Hendrick C."/>
            <person name="Zhao Z.-Y."/>
            <person name="Dolan M."/>
            <person name="Chumley F."/>
            <person name="Tingey S.V."/>
            <person name="Tomb J.-F."/>
            <person name="Gordon M.P."/>
            <person name="Olson M.V."/>
            <person name="Nester E.W."/>
        </authorList>
    </citation>
    <scope>NUCLEOTIDE SEQUENCE [LARGE SCALE GENOMIC DNA]</scope>
</reference>
<reference key="2">
    <citation type="journal article" date="2001" name="Science">
        <title>Genome sequence of the plant pathogen and biotechnology agent Agrobacterium tumefaciens C58.</title>
        <authorList>
            <person name="Goodner B."/>
            <person name="Hinkle G."/>
            <person name="Gattung S."/>
            <person name="Miller N."/>
            <person name="Blanchard M."/>
            <person name="Qurollo B."/>
            <person name="Goldman B.S."/>
            <person name="Cao Y."/>
            <person name="Askenazi M."/>
            <person name="Halling C."/>
            <person name="Mullin L."/>
            <person name="Houmiel K."/>
            <person name="Gordon J."/>
            <person name="Vaudin M."/>
            <person name="Iartchouk O."/>
            <person name="Epp A."/>
            <person name="Liu F."/>
            <person name="Wollam C."/>
            <person name="Allinger M."/>
            <person name="Doughty D."/>
            <person name="Scott C."/>
            <person name="Lappas C."/>
            <person name="Markelz B."/>
            <person name="Flanagan C."/>
            <person name="Crowell C."/>
            <person name="Gurson J."/>
            <person name="Lomo C."/>
            <person name="Sear C."/>
            <person name="Strub G."/>
            <person name="Cielo C."/>
            <person name="Slater S."/>
        </authorList>
    </citation>
    <scope>NUCLEOTIDE SEQUENCE [LARGE SCALE GENOMIC DNA]</scope>
    <source>
        <strain>C58 / ATCC 33970</strain>
    </source>
</reference>
<keyword id="KW-0963">Cytoplasm</keyword>
<keyword id="KW-0227">DNA damage</keyword>
<keyword id="KW-0234">DNA repair</keyword>
<keyword id="KW-0235">DNA replication</keyword>
<keyword id="KW-0239">DNA-directed DNA polymerase</keyword>
<keyword id="KW-0548">Nucleotidyltransferase</keyword>
<keyword id="KW-0614">Plasmid</keyword>
<keyword id="KW-1185">Reference proteome</keyword>
<keyword id="KW-0808">Transferase</keyword>
<dbReference type="EC" id="2.7.7.7" evidence="1"/>
<dbReference type="EMBL" id="AE007871">
    <property type="protein sequence ID" value="AAK91053.1"/>
    <property type="molecule type" value="Genomic_DNA"/>
</dbReference>
<dbReference type="PIR" id="AC3239">
    <property type="entry name" value="AC3239"/>
</dbReference>
<dbReference type="RefSeq" id="NP_396612.1">
    <property type="nucleotide sequence ID" value="NC_003065.3"/>
</dbReference>
<dbReference type="RefSeq" id="WP_010974875.1">
    <property type="nucleotide sequence ID" value="NC_003065.3"/>
</dbReference>
<dbReference type="SMR" id="Q8U642"/>
<dbReference type="EnsemblBacteria" id="AAK91053">
    <property type="protein sequence ID" value="AAK91053"/>
    <property type="gene ID" value="Atu6093"/>
</dbReference>
<dbReference type="GeneID" id="1137416"/>
<dbReference type="KEGG" id="atu:Atu6093"/>
<dbReference type="PATRIC" id="fig|176299.10.peg.5300"/>
<dbReference type="HOGENOM" id="CLU_001600_4_0_5"/>
<dbReference type="OrthoDB" id="9803237at2"/>
<dbReference type="PhylomeDB" id="Q8U642"/>
<dbReference type="BioCyc" id="AGRO:ATU6093-MONOMER"/>
<dbReference type="Proteomes" id="UP000000813">
    <property type="component" value="Plasmid Ti"/>
</dbReference>
<dbReference type="GO" id="GO:0005737">
    <property type="term" value="C:cytoplasm"/>
    <property type="evidence" value="ECO:0007669"/>
    <property type="project" value="UniProtKB-SubCell"/>
</dbReference>
<dbReference type="GO" id="GO:0008408">
    <property type="term" value="F:3'-5' exonuclease activity"/>
    <property type="evidence" value="ECO:0007669"/>
    <property type="project" value="InterPro"/>
</dbReference>
<dbReference type="GO" id="GO:0003887">
    <property type="term" value="F:DNA-directed DNA polymerase activity"/>
    <property type="evidence" value="ECO:0007669"/>
    <property type="project" value="UniProtKB-UniRule"/>
</dbReference>
<dbReference type="GO" id="GO:0003676">
    <property type="term" value="F:nucleic acid binding"/>
    <property type="evidence" value="ECO:0007669"/>
    <property type="project" value="InterPro"/>
</dbReference>
<dbReference type="GO" id="GO:0006281">
    <property type="term" value="P:DNA repair"/>
    <property type="evidence" value="ECO:0007669"/>
    <property type="project" value="UniProtKB-UniRule"/>
</dbReference>
<dbReference type="GO" id="GO:0006260">
    <property type="term" value="P:DNA replication"/>
    <property type="evidence" value="ECO:0007669"/>
    <property type="project" value="UniProtKB-KW"/>
</dbReference>
<dbReference type="CDD" id="cd04485">
    <property type="entry name" value="DnaE_OBF"/>
    <property type="match status" value="1"/>
</dbReference>
<dbReference type="CDD" id="cd07434">
    <property type="entry name" value="PHP_PolIIIA_DnaE2"/>
    <property type="match status" value="1"/>
</dbReference>
<dbReference type="FunFam" id="1.10.150.870:FF:000002">
    <property type="entry name" value="Error-prone DNA polymerase"/>
    <property type="match status" value="1"/>
</dbReference>
<dbReference type="Gene3D" id="1.10.150.870">
    <property type="match status" value="1"/>
</dbReference>
<dbReference type="Gene3D" id="3.20.20.140">
    <property type="entry name" value="Metal-dependent hydrolases"/>
    <property type="match status" value="1"/>
</dbReference>
<dbReference type="HAMAP" id="MF_01902">
    <property type="entry name" value="DNApol_error_prone"/>
    <property type="match status" value="1"/>
</dbReference>
<dbReference type="InterPro" id="IPR011708">
    <property type="entry name" value="DNA_pol3_alpha_NTPase_dom"/>
</dbReference>
<dbReference type="InterPro" id="IPR040982">
    <property type="entry name" value="DNA_pol3_finger"/>
</dbReference>
<dbReference type="InterPro" id="IPR023073">
    <property type="entry name" value="DnaE2"/>
</dbReference>
<dbReference type="InterPro" id="IPR004805">
    <property type="entry name" value="DnaE2/DnaE/PolC"/>
</dbReference>
<dbReference type="InterPro" id="IPR029460">
    <property type="entry name" value="DNAPol_HHH"/>
</dbReference>
<dbReference type="InterPro" id="IPR004365">
    <property type="entry name" value="NA-bd_OB_tRNA"/>
</dbReference>
<dbReference type="InterPro" id="IPR004013">
    <property type="entry name" value="PHP_dom"/>
</dbReference>
<dbReference type="InterPro" id="IPR003141">
    <property type="entry name" value="Pol/His_phosphatase_N"/>
</dbReference>
<dbReference type="InterPro" id="IPR016195">
    <property type="entry name" value="Pol/histidinol_Pase-like"/>
</dbReference>
<dbReference type="NCBIfam" id="TIGR00594">
    <property type="entry name" value="polc"/>
    <property type="match status" value="1"/>
</dbReference>
<dbReference type="NCBIfam" id="NF004225">
    <property type="entry name" value="PRK05672.1"/>
    <property type="match status" value="1"/>
</dbReference>
<dbReference type="PANTHER" id="PTHR32294">
    <property type="entry name" value="DNA POLYMERASE III SUBUNIT ALPHA"/>
    <property type="match status" value="1"/>
</dbReference>
<dbReference type="PANTHER" id="PTHR32294:SF4">
    <property type="entry name" value="ERROR-PRONE DNA POLYMERASE"/>
    <property type="match status" value="1"/>
</dbReference>
<dbReference type="Pfam" id="PF07733">
    <property type="entry name" value="DNA_pol3_alpha"/>
    <property type="match status" value="1"/>
</dbReference>
<dbReference type="Pfam" id="PF17657">
    <property type="entry name" value="DNA_pol3_finger"/>
    <property type="match status" value="1"/>
</dbReference>
<dbReference type="Pfam" id="PF14579">
    <property type="entry name" value="HHH_6"/>
    <property type="match status" value="1"/>
</dbReference>
<dbReference type="Pfam" id="PF02811">
    <property type="entry name" value="PHP"/>
    <property type="match status" value="1"/>
</dbReference>
<dbReference type="Pfam" id="PF01336">
    <property type="entry name" value="tRNA_anti-codon"/>
    <property type="match status" value="1"/>
</dbReference>
<dbReference type="SMART" id="SM00481">
    <property type="entry name" value="POLIIIAc"/>
    <property type="match status" value="1"/>
</dbReference>
<dbReference type="SUPFAM" id="SSF89550">
    <property type="entry name" value="PHP domain-like"/>
    <property type="match status" value="1"/>
</dbReference>
<accession>Q8U642</accession>
<accession>Q7D2J1</accession>
<name>DNE23_AGRFC</name>